<proteinExistence type="inferred from homology"/>
<evidence type="ECO:0000250" key="1">
    <source>
        <dbReference type="UniProtKB" id="Q12092"/>
    </source>
</evidence>
<evidence type="ECO:0000256" key="2">
    <source>
        <dbReference type="SAM" id="MobiDB-lite"/>
    </source>
</evidence>
<evidence type="ECO:0000269" key="3">
    <source>
    </source>
</evidence>
<evidence type="ECO:0000303" key="4">
    <source>
    </source>
</evidence>
<evidence type="ECO:0000305" key="5"/>
<protein>
    <recommendedName>
        <fullName evidence="4">Autophagy-related protein 29</fullName>
    </recommendedName>
</protein>
<name>ATG29_GIBZE</name>
<organism>
    <name type="scientific">Gibberella zeae (strain ATCC MYA-4620 / CBS 123657 / FGSC 9075 / NRRL 31084 / PH-1)</name>
    <name type="common">Wheat head blight fungus</name>
    <name type="synonym">Fusarium graminearum</name>
    <dbReference type="NCBI Taxonomy" id="229533"/>
    <lineage>
        <taxon>Eukaryota</taxon>
        <taxon>Fungi</taxon>
        <taxon>Dikarya</taxon>
        <taxon>Ascomycota</taxon>
        <taxon>Pezizomycotina</taxon>
        <taxon>Sordariomycetes</taxon>
        <taxon>Hypocreomycetidae</taxon>
        <taxon>Hypocreales</taxon>
        <taxon>Nectriaceae</taxon>
        <taxon>Fusarium</taxon>
    </lineage>
</organism>
<keyword id="KW-0072">Autophagy</keyword>
<keyword id="KW-0653">Protein transport</keyword>
<keyword id="KW-1185">Reference proteome</keyword>
<keyword id="KW-0813">Transport</keyword>
<dbReference type="EMBL" id="HG970335">
    <property type="protein sequence ID" value="SCB65453.1"/>
    <property type="status" value="ALT_SEQ"/>
    <property type="molecule type" value="Genomic_DNA"/>
</dbReference>
<dbReference type="SMR" id="A0A098DPY0"/>
<dbReference type="STRING" id="229533.A0A098DPY0"/>
<dbReference type="eggNOG" id="ENOG502S3V4">
    <property type="taxonomic scope" value="Eukaryota"/>
</dbReference>
<dbReference type="InParanoid" id="A0A098DPY0"/>
<dbReference type="Proteomes" id="UP000070720">
    <property type="component" value="Chromosome 4"/>
</dbReference>
<dbReference type="GO" id="GO:0000407">
    <property type="term" value="C:phagophore assembly site"/>
    <property type="evidence" value="ECO:0007669"/>
    <property type="project" value="UniProtKB-SubCell"/>
</dbReference>
<dbReference type="GO" id="GO:0000045">
    <property type="term" value="P:autophagosome assembly"/>
    <property type="evidence" value="ECO:0007669"/>
    <property type="project" value="InterPro"/>
</dbReference>
<dbReference type="GO" id="GO:0015031">
    <property type="term" value="P:protein transport"/>
    <property type="evidence" value="ECO:0007669"/>
    <property type="project" value="UniProtKB-KW"/>
</dbReference>
<dbReference type="Gene3D" id="1.10.10.2570">
    <property type="match status" value="1"/>
</dbReference>
<dbReference type="InterPro" id="IPR039113">
    <property type="entry name" value="ATG29"/>
</dbReference>
<dbReference type="InterPro" id="IPR040666">
    <property type="entry name" value="Atg29_N"/>
</dbReference>
<dbReference type="InterPro" id="IPR039362">
    <property type="entry name" value="ATG29_sf"/>
</dbReference>
<dbReference type="PANTHER" id="PTHR40012">
    <property type="entry name" value="AUTOPHAGY-RELATED PROTEIN 29"/>
    <property type="match status" value="1"/>
</dbReference>
<dbReference type="PANTHER" id="PTHR40012:SF1">
    <property type="entry name" value="AUTOPHAGY-RELATED PROTEIN 29"/>
    <property type="match status" value="1"/>
</dbReference>
<dbReference type="Pfam" id="PF18388">
    <property type="entry name" value="ATG29_N"/>
    <property type="match status" value="1"/>
</dbReference>
<accession>A0A098DPY0</accession>
<accession>A0A0E0SBS2</accession>
<accession>A0A1C3YM03</accession>
<reference key="1">
    <citation type="journal article" date="2007" name="Science">
        <title>The Fusarium graminearum genome reveals a link between localized polymorphism and pathogen specialization.</title>
        <authorList>
            <person name="Cuomo C.A."/>
            <person name="Gueldener U."/>
            <person name="Xu J.-R."/>
            <person name="Trail F."/>
            <person name="Turgeon B.G."/>
            <person name="Di Pietro A."/>
            <person name="Walton J.D."/>
            <person name="Ma L.-J."/>
            <person name="Baker S.E."/>
            <person name="Rep M."/>
            <person name="Adam G."/>
            <person name="Antoniw J."/>
            <person name="Baldwin T."/>
            <person name="Calvo S.E."/>
            <person name="Chang Y.-L."/>
            <person name="DeCaprio D."/>
            <person name="Gale L.R."/>
            <person name="Gnerre S."/>
            <person name="Goswami R.S."/>
            <person name="Hammond-Kosack K."/>
            <person name="Harris L.J."/>
            <person name="Hilburn K."/>
            <person name="Kennell J.C."/>
            <person name="Kroken S."/>
            <person name="Magnuson J.K."/>
            <person name="Mannhaupt G."/>
            <person name="Mauceli E.W."/>
            <person name="Mewes H.-W."/>
            <person name="Mitterbauer R."/>
            <person name="Muehlbauer G."/>
            <person name="Muensterkoetter M."/>
            <person name="Nelson D."/>
            <person name="O'Donnell K."/>
            <person name="Ouellet T."/>
            <person name="Qi W."/>
            <person name="Quesneville H."/>
            <person name="Roncero M.I.G."/>
            <person name="Seong K.-Y."/>
            <person name="Tetko I.V."/>
            <person name="Urban M."/>
            <person name="Waalwijk C."/>
            <person name="Ward T.J."/>
            <person name="Yao J."/>
            <person name="Birren B.W."/>
            <person name="Kistler H.C."/>
        </authorList>
    </citation>
    <scope>NUCLEOTIDE SEQUENCE [LARGE SCALE GENOMIC DNA]</scope>
    <source>
        <strain>ATCC MYA-4620 / CBS 123657 / FGSC 9075 / NRRL 31084 / PH-1</strain>
    </source>
</reference>
<reference key="2">
    <citation type="journal article" date="2010" name="Nature">
        <title>Comparative genomics reveals mobile pathogenicity chromosomes in Fusarium.</title>
        <authorList>
            <person name="Ma L.-J."/>
            <person name="van der Does H.C."/>
            <person name="Borkovich K.A."/>
            <person name="Coleman J.J."/>
            <person name="Daboussi M.-J."/>
            <person name="Di Pietro A."/>
            <person name="Dufresne M."/>
            <person name="Freitag M."/>
            <person name="Grabherr M."/>
            <person name="Henrissat B."/>
            <person name="Houterman P.M."/>
            <person name="Kang S."/>
            <person name="Shim W.-B."/>
            <person name="Woloshuk C."/>
            <person name="Xie X."/>
            <person name="Xu J.-R."/>
            <person name="Antoniw J."/>
            <person name="Baker S.E."/>
            <person name="Bluhm B.H."/>
            <person name="Breakspear A."/>
            <person name="Brown D.W."/>
            <person name="Butchko R.A.E."/>
            <person name="Chapman S."/>
            <person name="Coulson R."/>
            <person name="Coutinho P.M."/>
            <person name="Danchin E.G.J."/>
            <person name="Diener A."/>
            <person name="Gale L.R."/>
            <person name="Gardiner D.M."/>
            <person name="Goff S."/>
            <person name="Hammond-Kosack K.E."/>
            <person name="Hilburn K."/>
            <person name="Hua-Van A."/>
            <person name="Jonkers W."/>
            <person name="Kazan K."/>
            <person name="Kodira C.D."/>
            <person name="Koehrsen M."/>
            <person name="Kumar L."/>
            <person name="Lee Y.-H."/>
            <person name="Li L."/>
            <person name="Manners J.M."/>
            <person name="Miranda-Saavedra D."/>
            <person name="Mukherjee M."/>
            <person name="Park G."/>
            <person name="Park J."/>
            <person name="Park S.-Y."/>
            <person name="Proctor R.H."/>
            <person name="Regev A."/>
            <person name="Ruiz-Roldan M.C."/>
            <person name="Sain D."/>
            <person name="Sakthikumar S."/>
            <person name="Sykes S."/>
            <person name="Schwartz D.C."/>
            <person name="Turgeon B.G."/>
            <person name="Wapinski I."/>
            <person name="Yoder O."/>
            <person name="Young S."/>
            <person name="Zeng Q."/>
            <person name="Zhou S."/>
            <person name="Galagan J."/>
            <person name="Cuomo C.A."/>
            <person name="Kistler H.C."/>
            <person name="Rep M."/>
        </authorList>
    </citation>
    <scope>GENOME REANNOTATION</scope>
    <source>
        <strain>ATCC MYA-4620 / CBS 123657 / FGSC 9075 / NRRL 31084 / PH-1</strain>
    </source>
</reference>
<reference key="3">
    <citation type="journal article" date="2015" name="BMC Genomics">
        <title>The completed genome sequence of the pathogenic ascomycete fungus Fusarium graminearum.</title>
        <authorList>
            <person name="King R."/>
            <person name="Urban M."/>
            <person name="Hammond-Kosack M.C.U."/>
            <person name="Hassani-Pak K."/>
            <person name="Hammond-Kosack K.E."/>
        </authorList>
    </citation>
    <scope>NUCLEOTIDE SEQUENCE [LARGE SCALE GENOMIC DNA]</scope>
    <source>
        <strain>ATCC MYA-4620 / CBS 123657 / FGSC 9075 / NRRL 31084 / PH-1</strain>
    </source>
</reference>
<reference key="4">
    <citation type="journal article" date="2017" name="Sci. Rep.">
        <title>Genome-wide functional analysis reveals that autophagy is necessary for growth, sporulation, deoxynivalenol production and virulence in Fusarium graminearum.</title>
        <authorList>
            <person name="Lv W."/>
            <person name="Wang C."/>
            <person name="Yang N."/>
            <person name="Que Y."/>
            <person name="Talbot N.J."/>
            <person name="Wang Z."/>
        </authorList>
    </citation>
    <scope>IDENTIFICATION</scope>
    <scope>FUNCTION</scope>
    <scope>DISRUPTION PHENOTYPE</scope>
</reference>
<comment type="function">
    <text evidence="1 3">Plays a role in autophagy (By similarity). Functions at the preautophagosomal structure (PAS) in order to form normal autophagosomes under starvation conditions (By similarity). Also plays a role in mitophagy (By similarity). Autophagy is required for proper vegetative growth, asexual/sexual reproduction, and full virulence (PubMed:28894236). Autophagy is particularly involved in the biosynthesis of deoxynivalenol (DON), an important virulence determinant (PubMed:28894236).</text>
</comment>
<comment type="subunit">
    <text evidence="1">Forms a stable complex with ATG17 and ATG31 (By similarity). Interacts directly with ATG31 (By similarity). The ATG17-ATG29-ATG31 complex interacts with the ATG1-ATG13 complex (By similarity). Note=The interaction with the ATG1-ATG13 complex is induced by starvation (By similarity).</text>
</comment>
<comment type="subcellular location">
    <subcellularLocation>
        <location evidence="1">Preautophagosomal structure</location>
    </subcellularLocation>
    <text evidence="1">Also localizes to other perivacuolar punctate structures (By similarity).</text>
</comment>
<comment type="disruption phenotype">
    <text evidence="3">Significantly decreases the radial growth of colonies under nutrient-rich conditions (PubMed:28894236).</text>
</comment>
<comment type="similarity">
    <text evidence="5">Belongs to the ATG29 family.</text>
</comment>
<comment type="sequence caution" evidence="5">
    <conflict type="erroneous gene model prediction">
        <sequence resource="EMBL-CDS" id="SCB65453"/>
    </conflict>
</comment>
<feature type="chain" id="PRO_0000443926" description="Autophagy-related protein 29">
    <location>
        <begin position="1"/>
        <end position="397"/>
    </location>
</feature>
<feature type="region of interest" description="Disordered" evidence="2">
    <location>
        <begin position="71"/>
        <end position="397"/>
    </location>
</feature>
<feature type="compositionally biased region" description="Acidic residues" evidence="2">
    <location>
        <begin position="230"/>
        <end position="240"/>
    </location>
</feature>
<feature type="compositionally biased region" description="Polar residues" evidence="2">
    <location>
        <begin position="245"/>
        <end position="259"/>
    </location>
</feature>
<feature type="compositionally biased region" description="Basic residues" evidence="2">
    <location>
        <begin position="269"/>
        <end position="282"/>
    </location>
</feature>
<feature type="compositionally biased region" description="Basic and acidic residues" evidence="2">
    <location>
        <begin position="300"/>
        <end position="309"/>
    </location>
</feature>
<feature type="compositionally biased region" description="Basic and acidic residues" evidence="2">
    <location>
        <begin position="330"/>
        <end position="341"/>
    </location>
</feature>
<feature type="compositionally biased region" description="Polar residues" evidence="2">
    <location>
        <begin position="343"/>
        <end position="363"/>
    </location>
</feature>
<feature type="compositionally biased region" description="Polar residues" evidence="2">
    <location>
        <begin position="381"/>
        <end position="397"/>
    </location>
</feature>
<gene>
    <name evidence="4" type="primary">ATG29</name>
    <name type="ORF">FGRAMPH1_01T27149</name>
</gene>
<sequence>MPRGDFVDPPPVNWDLVKDEALWKILSGAAERQIDCKNADRFEVSVDFLLQQVAWLTERHASQVRAQVRKATAAVRNSGPSPVPSGEPAGSGHQRAHSALSFRRDSPRNEAGSGTGTPLHSSMRPLVARNTSTNTTVLRDMTGAPASPRPGVGLASRAGDRRRLSSLPITSVPDKSLEQTAQPELSPEERSPSPGPAEDSSPTSSDDESIPAQSRIIRRPPRYQPPDGGQYEDDDDDESEPAFQPYTSPSSKTSAQDLGSTLRGDKPVSGKRPHKSHGKPAIHKSNTSDSSASSAAIIQKPDKTDRSTEQRTPGPLSPHRPAELTGRSPGGKDKGYSREGSEGTPSMGSSYSDLDDASVTQSALEEALASHMNSRGAGSRFSISQAFRSRYTSSSNQ</sequence>